<feature type="chain" id="PRO_0000144779" description="Claudin-18">
    <location>
        <begin position="1"/>
        <end position="261"/>
    </location>
</feature>
<feature type="topological domain" description="Cytoplasmic" evidence="2">
    <location>
        <begin position="1"/>
        <end position="6"/>
    </location>
</feature>
<feature type="transmembrane region" description="Helical" evidence="2">
    <location>
        <begin position="7"/>
        <end position="27"/>
    </location>
</feature>
<feature type="topological domain" description="Extracellular" evidence="2">
    <location>
        <begin position="28"/>
        <end position="80"/>
    </location>
</feature>
<feature type="transmembrane region" description="Helical" evidence="2">
    <location>
        <begin position="81"/>
        <end position="101"/>
    </location>
</feature>
<feature type="topological domain" description="Cytoplasmic" evidence="2">
    <location>
        <begin position="102"/>
        <end position="122"/>
    </location>
</feature>
<feature type="transmembrane region" description="Helical" evidence="2">
    <location>
        <begin position="123"/>
        <end position="143"/>
    </location>
</feature>
<feature type="topological domain" description="Extracellular" evidence="2">
    <location>
        <begin position="144"/>
        <end position="174"/>
    </location>
</feature>
<feature type="transmembrane region" description="Helical" evidence="2">
    <location>
        <begin position="175"/>
        <end position="195"/>
    </location>
</feature>
<feature type="topological domain" description="Cytoplasmic" evidence="2">
    <location>
        <begin position="196"/>
        <end position="261"/>
    </location>
</feature>
<feature type="region of interest" description="Required for role in regulation of RANKL-induced osteoclast differentiation" evidence="1">
    <location>
        <begin position="195"/>
        <end position="261"/>
    </location>
</feature>
<feature type="region of interest" description="Disordered" evidence="3">
    <location>
        <begin position="242"/>
        <end position="261"/>
    </location>
</feature>
<feature type="modified residue" description="Phosphoserine" evidence="1">
    <location>
        <position position="214"/>
    </location>
</feature>
<feature type="splice variant" id="VSP_001102" description="In isoform A2." evidence="9">
    <original>MSTTTCQVVAFLLSILGLAGCIAATGMDMWSTQDLYDNPVTSVFQYEGLWRSCVRQSSGFTECRPYFTI</original>
    <variation>MAVTACQGLGFVVSLIGIAGIIAATCMDQWSTQDLYNNPVTAVFNYQGLWRSCVRESSGFTECRGYFTL</variation>
    <location>
        <begin position="1"/>
        <end position="69"/>
    </location>
</feature>
<feature type="sequence variant" id="VAR_033775" description="In dbSNP:rs17204075.">
    <original>M</original>
    <variation>L</variation>
    <location>
        <position position="149"/>
    </location>
</feature>
<protein>
    <recommendedName>
        <fullName>Claudin-18</fullName>
    </recommendedName>
</protein>
<dbReference type="EMBL" id="AF221069">
    <property type="protein sequence ID" value="AAF26448.1"/>
    <property type="molecule type" value="mRNA"/>
</dbReference>
<dbReference type="EMBL" id="AF349452">
    <property type="protein sequence ID" value="AAL15637.1"/>
    <property type="molecule type" value="mRNA"/>
</dbReference>
<dbReference type="EMBL" id="AY358479">
    <property type="protein sequence ID" value="AAQ88843.1"/>
    <property type="molecule type" value="mRNA"/>
</dbReference>
<dbReference type="EMBL" id="CH471052">
    <property type="protein sequence ID" value="EAW79092.1"/>
    <property type="molecule type" value="Genomic_DNA"/>
</dbReference>
<dbReference type="EMBL" id="BC142708">
    <property type="protein sequence ID" value="AAI42709.1"/>
    <property type="molecule type" value="mRNA"/>
</dbReference>
<dbReference type="EMBL" id="BC146668">
    <property type="protein sequence ID" value="AAI46669.1"/>
    <property type="molecule type" value="mRNA"/>
</dbReference>
<dbReference type="CCDS" id="CCDS3095.1">
    <molecule id="P56856-1"/>
</dbReference>
<dbReference type="CCDS" id="CCDS33862.1">
    <molecule id="P56856-2"/>
</dbReference>
<dbReference type="RefSeq" id="NP_001002026.1">
    <molecule id="P56856-2"/>
    <property type="nucleotide sequence ID" value="NM_001002026.3"/>
</dbReference>
<dbReference type="RefSeq" id="NP_057453.1">
    <molecule id="P56856-1"/>
    <property type="nucleotide sequence ID" value="NM_016369.4"/>
</dbReference>
<dbReference type="SMR" id="P56856"/>
<dbReference type="BioGRID" id="119381">
    <property type="interactions" value="37"/>
</dbReference>
<dbReference type="DIP" id="DIP-48955N"/>
<dbReference type="FunCoup" id="P56856">
    <property type="interactions" value="354"/>
</dbReference>
<dbReference type="IntAct" id="P56856">
    <property type="interactions" value="6"/>
</dbReference>
<dbReference type="STRING" id="9606.ENSP00000340939"/>
<dbReference type="ChEMBL" id="CHEMBL3712859"/>
<dbReference type="DrugBank" id="DB15118">
    <property type="generic name" value="Zolbetuximab"/>
</dbReference>
<dbReference type="GlyConnect" id="2029">
    <property type="glycosylation" value="1 N-Linked glycan (1 site)"/>
</dbReference>
<dbReference type="GlyCosmos" id="P56856">
    <property type="glycosylation" value="1 site, 2 glycans"/>
</dbReference>
<dbReference type="GlyGen" id="P56856">
    <property type="glycosylation" value="1 site, 2 N-linked glycans (1 site)"/>
</dbReference>
<dbReference type="iPTMnet" id="P56856"/>
<dbReference type="PhosphoSitePlus" id="P56856"/>
<dbReference type="BioMuta" id="CLDN18"/>
<dbReference type="DMDM" id="7387578"/>
<dbReference type="MassIVE" id="P56856"/>
<dbReference type="PaxDb" id="9606-ENSP00000183605"/>
<dbReference type="PeptideAtlas" id="P56856"/>
<dbReference type="ProteomicsDB" id="56953">
    <molecule id="P56856-1"/>
</dbReference>
<dbReference type="ProteomicsDB" id="56954">
    <molecule id="P56856-2"/>
</dbReference>
<dbReference type="ABCD" id="P56856">
    <property type="antibodies" value="33 sequenced antibodies"/>
</dbReference>
<dbReference type="Antibodypedia" id="4575">
    <property type="antibodies" value="280 antibodies from 33 providers"/>
</dbReference>
<dbReference type="DNASU" id="51208"/>
<dbReference type="Ensembl" id="ENST00000183605.10">
    <molecule id="P56856-1"/>
    <property type="protein sequence ID" value="ENSP00000183605.5"/>
    <property type="gene ID" value="ENSG00000066405.13"/>
</dbReference>
<dbReference type="Ensembl" id="ENST00000343735.8">
    <molecule id="P56856-2"/>
    <property type="protein sequence ID" value="ENSP00000340939.4"/>
    <property type="gene ID" value="ENSG00000066405.13"/>
</dbReference>
<dbReference type="GeneID" id="51208"/>
<dbReference type="KEGG" id="hsa:51208"/>
<dbReference type="MANE-Select" id="ENST00000183605.10">
    <property type="protein sequence ID" value="ENSP00000183605.5"/>
    <property type="RefSeq nucleotide sequence ID" value="NM_016369.4"/>
    <property type="RefSeq protein sequence ID" value="NP_057453.1"/>
</dbReference>
<dbReference type="UCSC" id="uc003ero.2">
    <molecule id="P56856-1"/>
    <property type="organism name" value="human"/>
</dbReference>
<dbReference type="AGR" id="HGNC:2039"/>
<dbReference type="CTD" id="51208"/>
<dbReference type="DisGeNET" id="51208"/>
<dbReference type="GeneCards" id="CLDN18"/>
<dbReference type="HGNC" id="HGNC:2039">
    <property type="gene designation" value="CLDN18"/>
</dbReference>
<dbReference type="HPA" id="ENSG00000066405">
    <property type="expression patterns" value="Group enriched (lung, stomach)"/>
</dbReference>
<dbReference type="MIM" id="609210">
    <property type="type" value="gene"/>
</dbReference>
<dbReference type="neXtProt" id="NX_P56856"/>
<dbReference type="OpenTargets" id="ENSG00000066405"/>
<dbReference type="PharmGKB" id="PA26565"/>
<dbReference type="VEuPathDB" id="HostDB:ENSG00000066405"/>
<dbReference type="eggNOG" id="ENOG502QTRB">
    <property type="taxonomic scope" value="Eukaryota"/>
</dbReference>
<dbReference type="GeneTree" id="ENSGT00940000158655"/>
<dbReference type="HOGENOM" id="CLU_076370_2_1_1"/>
<dbReference type="InParanoid" id="P56856"/>
<dbReference type="OMA" id="TICQVMG"/>
<dbReference type="OrthoDB" id="8795554at2759"/>
<dbReference type="PAN-GO" id="P56856">
    <property type="GO annotations" value="4 GO annotations based on evolutionary models"/>
</dbReference>
<dbReference type="PhylomeDB" id="P56856"/>
<dbReference type="TreeFam" id="TF331936"/>
<dbReference type="PathwayCommons" id="P56856"/>
<dbReference type="Reactome" id="R-HSA-420029">
    <property type="pathway name" value="Tight junction interactions"/>
</dbReference>
<dbReference type="SignaLink" id="P56856"/>
<dbReference type="BioGRID-ORCS" id="51208">
    <property type="hits" value="14 hits in 1139 CRISPR screens"/>
</dbReference>
<dbReference type="ChiTaRS" id="CLDN18">
    <property type="organism name" value="human"/>
</dbReference>
<dbReference type="GeneWiki" id="CLDN18"/>
<dbReference type="GenomeRNAi" id="51208"/>
<dbReference type="Pharos" id="P56856">
    <property type="development level" value="Tbio"/>
</dbReference>
<dbReference type="PRO" id="PR:P56856"/>
<dbReference type="Proteomes" id="UP000005640">
    <property type="component" value="Chromosome 3"/>
</dbReference>
<dbReference type="RNAct" id="P56856">
    <property type="molecule type" value="protein"/>
</dbReference>
<dbReference type="Bgee" id="ENSG00000066405">
    <property type="expression patterns" value="Expressed in pylorus and 138 other cell types or tissues"/>
</dbReference>
<dbReference type="ExpressionAtlas" id="P56856">
    <property type="expression patterns" value="baseline and differential"/>
</dbReference>
<dbReference type="GO" id="GO:0005923">
    <property type="term" value="C:bicellular tight junction"/>
    <property type="evidence" value="ECO:0000250"/>
    <property type="project" value="UniProtKB"/>
</dbReference>
<dbReference type="GO" id="GO:0005911">
    <property type="term" value="C:cell-cell junction"/>
    <property type="evidence" value="ECO:0000250"/>
    <property type="project" value="UniProtKB"/>
</dbReference>
<dbReference type="GO" id="GO:0016328">
    <property type="term" value="C:lateral plasma membrane"/>
    <property type="evidence" value="ECO:0007669"/>
    <property type="project" value="UniProtKB-SubCell"/>
</dbReference>
<dbReference type="GO" id="GO:0005886">
    <property type="term" value="C:plasma membrane"/>
    <property type="evidence" value="ECO:0000250"/>
    <property type="project" value="UniProtKB"/>
</dbReference>
<dbReference type="GO" id="GO:0042802">
    <property type="term" value="F:identical protein binding"/>
    <property type="evidence" value="ECO:0000250"/>
    <property type="project" value="UniProtKB"/>
</dbReference>
<dbReference type="GO" id="GO:0005198">
    <property type="term" value="F:structural molecule activity"/>
    <property type="evidence" value="ECO:0007669"/>
    <property type="project" value="InterPro"/>
</dbReference>
<dbReference type="GO" id="GO:0070830">
    <property type="term" value="P:bicellular tight junction assembly"/>
    <property type="evidence" value="ECO:0000318"/>
    <property type="project" value="GO_Central"/>
</dbReference>
<dbReference type="GO" id="GO:0016338">
    <property type="term" value="P:calcium-independent cell-cell adhesion via plasma membrane cell-adhesion molecules"/>
    <property type="evidence" value="ECO:0000250"/>
    <property type="project" value="UniProtKB"/>
</dbReference>
<dbReference type="GO" id="GO:0007155">
    <property type="term" value="P:cell adhesion"/>
    <property type="evidence" value="ECO:0000318"/>
    <property type="project" value="GO_Central"/>
</dbReference>
<dbReference type="GO" id="GO:0071391">
    <property type="term" value="P:cellular response to estrogen stimulus"/>
    <property type="evidence" value="ECO:0000250"/>
    <property type="project" value="UniProtKB"/>
</dbReference>
<dbReference type="GO" id="GO:0048565">
    <property type="term" value="P:digestive tract development"/>
    <property type="evidence" value="ECO:0007669"/>
    <property type="project" value="Ensembl"/>
</dbReference>
<dbReference type="GO" id="GO:0050673">
    <property type="term" value="P:epithelial cell proliferation"/>
    <property type="evidence" value="ECO:0000250"/>
    <property type="project" value="UniProtKB"/>
</dbReference>
<dbReference type="GO" id="GO:0042045">
    <property type="term" value="P:epithelial fluid transport"/>
    <property type="evidence" value="ECO:0000250"/>
    <property type="project" value="UniProtKB"/>
</dbReference>
<dbReference type="GO" id="GO:0048286">
    <property type="term" value="P:lung alveolus development"/>
    <property type="evidence" value="ECO:0000250"/>
    <property type="project" value="UniProtKB"/>
</dbReference>
<dbReference type="GO" id="GO:0045779">
    <property type="term" value="P:negative regulation of bone resorption"/>
    <property type="evidence" value="ECO:0007669"/>
    <property type="project" value="Ensembl"/>
</dbReference>
<dbReference type="GO" id="GO:2001205">
    <property type="term" value="P:negative regulation of osteoclast development"/>
    <property type="evidence" value="ECO:0007669"/>
    <property type="project" value="Ensembl"/>
</dbReference>
<dbReference type="GO" id="GO:1900181">
    <property type="term" value="P:negative regulation of protein localization to nucleus"/>
    <property type="evidence" value="ECO:0000250"/>
    <property type="project" value="UniProtKB"/>
</dbReference>
<dbReference type="GO" id="GO:0010804">
    <property type="term" value="P:negative regulation of tumor necrosis factor-mediated signaling pathway"/>
    <property type="evidence" value="ECO:0007669"/>
    <property type="project" value="Ensembl"/>
</dbReference>
<dbReference type="GO" id="GO:0035265">
    <property type="term" value="P:organ growth"/>
    <property type="evidence" value="ECO:0000250"/>
    <property type="project" value="UniProtKB"/>
</dbReference>
<dbReference type="GO" id="GO:0034504">
    <property type="term" value="P:protein localization to nucleus"/>
    <property type="evidence" value="ECO:0007669"/>
    <property type="project" value="Ensembl"/>
</dbReference>
<dbReference type="GO" id="GO:0045471">
    <property type="term" value="P:response to ethanol"/>
    <property type="evidence" value="ECO:0007669"/>
    <property type="project" value="Ensembl"/>
</dbReference>
<dbReference type="GO" id="GO:0120193">
    <property type="term" value="P:tight junction organization"/>
    <property type="evidence" value="ECO:0000250"/>
    <property type="project" value="UniProtKB"/>
</dbReference>
<dbReference type="FunFam" id="1.20.140.150:FF:000027">
    <property type="entry name" value="Claudin"/>
    <property type="match status" value="1"/>
</dbReference>
<dbReference type="Gene3D" id="1.20.140.150">
    <property type="match status" value="1"/>
</dbReference>
<dbReference type="InterPro" id="IPR006187">
    <property type="entry name" value="Claudin"/>
</dbReference>
<dbReference type="InterPro" id="IPR003928">
    <property type="entry name" value="Claudin18"/>
</dbReference>
<dbReference type="InterPro" id="IPR017974">
    <property type="entry name" value="Claudin_CS"/>
</dbReference>
<dbReference type="InterPro" id="IPR004031">
    <property type="entry name" value="PMP22/EMP/MP20/Claudin"/>
</dbReference>
<dbReference type="PANTHER" id="PTHR12002">
    <property type="entry name" value="CLAUDIN"/>
    <property type="match status" value="1"/>
</dbReference>
<dbReference type="Pfam" id="PF00822">
    <property type="entry name" value="PMP22_Claudin"/>
    <property type="match status" value="1"/>
</dbReference>
<dbReference type="PRINTS" id="PR01077">
    <property type="entry name" value="CLAUDIN"/>
</dbReference>
<dbReference type="PRINTS" id="PR01448">
    <property type="entry name" value="CLAUDIN18"/>
</dbReference>
<dbReference type="PROSITE" id="PS01346">
    <property type="entry name" value="CLAUDIN"/>
    <property type="match status" value="1"/>
</dbReference>
<accession>P56856</accession>
<accession>A5PL21</accession>
<accession>Q96PH4</accession>
<reference key="1">
    <citation type="journal article" date="2001" name="Mol. Cell. Biol.">
        <title>Claudin-18, a novel downstream target gene for the T/EBP/NKX2.1 homeodomain transcription factor, encodes lung- and stomach-specific isoforms through alternative splicing.</title>
        <authorList>
            <person name="Niimi T."/>
            <person name="Nagashima K."/>
            <person name="Ward J.M."/>
            <person name="Minoo P."/>
            <person name="Zimonjic D.B."/>
            <person name="Popescu N.C."/>
            <person name="Kimura S."/>
        </authorList>
    </citation>
    <scope>NUCLEOTIDE SEQUENCE [MRNA]</scope>
    <scope>ALTERNATIVE SPLICING</scope>
</reference>
<reference key="2">
    <citation type="journal article" date="2003" name="Genome Res.">
        <title>The secreted protein discovery initiative (SPDI), a large-scale effort to identify novel human secreted and transmembrane proteins: a bioinformatics assessment.</title>
        <authorList>
            <person name="Clark H.F."/>
            <person name="Gurney A.L."/>
            <person name="Abaya E."/>
            <person name="Baker K."/>
            <person name="Baldwin D.T."/>
            <person name="Brush J."/>
            <person name="Chen J."/>
            <person name="Chow B."/>
            <person name="Chui C."/>
            <person name="Crowley C."/>
            <person name="Currell B."/>
            <person name="Deuel B."/>
            <person name="Dowd P."/>
            <person name="Eaton D."/>
            <person name="Foster J.S."/>
            <person name="Grimaldi C."/>
            <person name="Gu Q."/>
            <person name="Hass P.E."/>
            <person name="Heldens S."/>
            <person name="Huang A."/>
            <person name="Kim H.S."/>
            <person name="Klimowski L."/>
            <person name="Jin Y."/>
            <person name="Johnson S."/>
            <person name="Lee J."/>
            <person name="Lewis L."/>
            <person name="Liao D."/>
            <person name="Mark M.R."/>
            <person name="Robbie E."/>
            <person name="Sanchez C."/>
            <person name="Schoenfeld J."/>
            <person name="Seshagiri S."/>
            <person name="Simmons L."/>
            <person name="Singh J."/>
            <person name="Smith V."/>
            <person name="Stinson J."/>
            <person name="Vagts A."/>
            <person name="Vandlen R.L."/>
            <person name="Watanabe C."/>
            <person name="Wieand D."/>
            <person name="Woods K."/>
            <person name="Xie M.-H."/>
            <person name="Yansura D.G."/>
            <person name="Yi S."/>
            <person name="Yu G."/>
            <person name="Yuan J."/>
            <person name="Zhang M."/>
            <person name="Zhang Z."/>
            <person name="Goddard A.D."/>
            <person name="Wood W.I."/>
            <person name="Godowski P.J."/>
            <person name="Gray A.M."/>
        </authorList>
    </citation>
    <scope>NUCLEOTIDE SEQUENCE [LARGE SCALE MRNA] (ISOFORM A1)</scope>
</reference>
<reference key="3">
    <citation type="submission" date="2005-09" db="EMBL/GenBank/DDBJ databases">
        <authorList>
            <person name="Mural R.J."/>
            <person name="Istrail S."/>
            <person name="Sutton G.G."/>
            <person name="Florea L."/>
            <person name="Halpern A.L."/>
            <person name="Mobarry C.M."/>
            <person name="Lippert R."/>
            <person name="Walenz B."/>
            <person name="Shatkay H."/>
            <person name="Dew I."/>
            <person name="Miller J.R."/>
            <person name="Flanigan M.J."/>
            <person name="Edwards N.J."/>
            <person name="Bolanos R."/>
            <person name="Fasulo D."/>
            <person name="Halldorsson B.V."/>
            <person name="Hannenhalli S."/>
            <person name="Turner R."/>
            <person name="Yooseph S."/>
            <person name="Lu F."/>
            <person name="Nusskern D.R."/>
            <person name="Shue B.C."/>
            <person name="Zheng X.H."/>
            <person name="Zhong F."/>
            <person name="Delcher A.L."/>
            <person name="Huson D.H."/>
            <person name="Kravitz S.A."/>
            <person name="Mouchard L."/>
            <person name="Reinert K."/>
            <person name="Remington K.A."/>
            <person name="Clark A.G."/>
            <person name="Waterman M.S."/>
            <person name="Eichler E.E."/>
            <person name="Adams M.D."/>
            <person name="Hunkapiller M.W."/>
            <person name="Myers E.W."/>
            <person name="Venter J.C."/>
        </authorList>
    </citation>
    <scope>NUCLEOTIDE SEQUENCE [LARGE SCALE GENOMIC DNA]</scope>
</reference>
<reference key="4">
    <citation type="journal article" date="2004" name="Genome Res.">
        <title>The status, quality, and expansion of the NIH full-length cDNA project: the Mammalian Gene Collection (MGC).</title>
        <authorList>
            <consortium name="The MGC Project Team"/>
        </authorList>
    </citation>
    <scope>NUCLEOTIDE SEQUENCE [LARGE SCALE MRNA] (ISOFORM A1)</scope>
</reference>
<reference key="5">
    <citation type="journal article" date="2008" name="Clin. Cancer Res.">
        <title>Claudin-18 splice variant 2 is a pan-cancer target suitable for therapeutic antibody development.</title>
        <authorList>
            <person name="Sahin U."/>
            <person name="Koslowski M."/>
            <person name="Dhaene K."/>
            <person name="Usener D."/>
            <person name="Brandenburg G."/>
            <person name="Seitz G."/>
            <person name="Huber C."/>
            <person name="Tuereci O."/>
        </authorList>
    </citation>
    <scope>TISSUE SPECIFICITY (ISOFORMS A1 AND A2)</scope>
</reference>
<reference key="6">
    <citation type="journal article" date="2009" name="Proc. Natl. Acad. Sci. U.S.A.">
        <title>Claudin-16 and claudin-19 interaction is required for their assembly into tight junctions and for renal reabsorption of magnesium.</title>
        <authorList>
            <person name="Hou J."/>
            <person name="Renigunta A."/>
            <person name="Gomes A.S."/>
            <person name="Hou M."/>
            <person name="Paul D.L."/>
            <person name="Waldegger S."/>
            <person name="Goodenough D.A."/>
        </authorList>
    </citation>
    <scope>INTERACTION WITH CLDN19 (ISOFORM A1)</scope>
</reference>
<reference key="7">
    <citation type="journal article" date="2014" name="Am. J. Respir. Cell Mol. Biol.">
        <title>Claudin-18 deficiency results in alveolar barrier dysfunction and impaired alveologenesis in mice.</title>
        <authorList>
            <person name="LaFemina M.J."/>
            <person name="Sutherland K.M."/>
            <person name="Bentley T."/>
            <person name="Gonzales L.W."/>
            <person name="Allen L."/>
            <person name="Chapin C.J."/>
            <person name="Rokkam D."/>
            <person name="Sweerus K.A."/>
            <person name="Dobbs L.G."/>
            <person name="Ballard P.L."/>
            <person name="Frank J.A."/>
        </authorList>
    </citation>
    <scope>DEVELOPMENTAL STAGE</scope>
</reference>
<sequence>MSTTTCQVVAFLLSILGLAGCIAATGMDMWSTQDLYDNPVTSVFQYEGLWRSCVRQSSGFTECRPYFTILGLPAMLQAVRALMIVGIVLGAIGLLVSIFALKCIRIGSMEDSAKANMTLTSGIMFIVSGLCAIAGVSVFANMLVTNFWMSTANMYTGMGGMVQTVQTRYTFGAALFVGWVAGGLTLIGGVMMCIACRGLAPEETNYKAVSYHASGHSVAYKPGGFKASTGFGSNTKNKKIYDGGARTEDEVQSYPSKHDYV</sequence>
<comment type="function">
    <text evidence="1">Involved in alveolar fluid homeostasis via regulation of alveolar epithelial tight junction composition and therefore ion transport and solute permeability, potentially via downstream regulation of the actin cytoskeleton organization and beta-2-adrenergic signaling (By similarity). Required for lung alveolarization and maintenance of the paracellular alveolar epithelial barrier (By similarity). Acts to maintain epithelial progenitor cell proliferation and organ size, via regulation of YAP1 localization away from the nucleus and thereby restriction of YAP1 target gene transcription (By similarity). Acts as a negative regulator of RANKL-induced osteoclast differentiation, potentially via relocation of TJP2/ZO-2 away from the nucleus, subsequently involved in bone resorption in response to calcium deficiency (By similarity). Mediates the osteoprotective effects of estrogen, potentially via acting downstream of estrogen signaling independently of RANKL signaling pathways (By similarity).</text>
</comment>
<comment type="function">
    <molecule>Isoform A1</molecule>
    <text evidence="1">Involved in the maintenance of homeostasis of the alveolar microenvironment via regulation of pH and subsequent T-cell activation in the alveolar space, is therefore indirectly involved in limiting C.neoformans infection.</text>
</comment>
<comment type="function">
    <molecule>Isoform A2</molecule>
    <text evidence="1">Required for the formation of the gastric paracellular barrier via its role in tight junction formation, thereby involved in the response to gastric acidification.</text>
</comment>
<comment type="subunit">
    <text evidence="1">Interacts with TJP2/ZO-2 (By similarity). Interacts with TJP1/ZO-1 (By similarity). Interacts with YAP1 (phosphorylated); the interaction sequesters YAP1 away from the nucleus and thereby restricts transcription of YAP1 target genes (By similarity).</text>
</comment>
<comment type="subunit">
    <molecule>Isoform A1</molecule>
    <text evidence="5">Interacts with CLDN19.</text>
</comment>
<comment type="interaction">
    <interactant intactId="EBI-16354902">
        <id>P56856</id>
    </interactant>
    <interactant intactId="EBI-2339219">
        <id>Q08426</id>
        <label>EHHADH</label>
    </interactant>
    <organismsDiffer>false</organismsDiffer>
    <experiments>3</experiments>
</comment>
<comment type="interaction">
    <interactant intactId="EBI-16354902">
        <id>P56856</id>
    </interactant>
    <interactant intactId="EBI-2845982">
        <id>Q01453</id>
        <label>PMP22</label>
    </interactant>
    <organismsDiffer>false</organismsDiffer>
    <experiments>3</experiments>
</comment>
<comment type="subcellular location">
    <subcellularLocation>
        <location evidence="1">Cell junction</location>
        <location evidence="1">Tight junction</location>
    </subcellularLocation>
    <subcellularLocation>
        <location evidence="1">Cell membrane</location>
        <topology evidence="2">Multi-pass membrane protein</topology>
    </subcellularLocation>
    <text evidence="1">Localizes to tight junctions in epithelial cells.</text>
</comment>
<comment type="subcellular location">
    <molecule>Isoform A1</molecule>
    <subcellularLocation>
        <location evidence="1">Cell junction</location>
        <location evidence="1">Tight junction</location>
    </subcellularLocation>
</comment>
<comment type="subcellular location">
    <molecule>Isoform A2</molecule>
    <subcellularLocation>
        <location evidence="1">Cell junction</location>
        <location evidence="1">Tight junction</location>
    </subcellularLocation>
    <subcellularLocation>
        <location evidence="1">Lateral cell membrane</location>
    </subcellularLocation>
</comment>
<comment type="alternative products">
    <event type="alternative splicing"/>
    <isoform>
        <id>P56856-1</id>
        <name evidence="7">A1</name>
        <name evidence="8">CLDN18.1</name>
        <sequence type="displayed"/>
    </isoform>
    <isoform>
        <id>P56856-2</id>
        <name evidence="7">A2</name>
        <name evidence="8">CLDN18.2</name>
        <sequence type="described" ref="VSP_001102"/>
    </isoform>
</comment>
<comment type="tissue specificity">
    <molecule>Isoform A1</molecule>
    <text evidence="4">Expression is restricted to the lung.</text>
</comment>
<comment type="tissue specificity">
    <molecule>Isoform A2</molecule>
    <text evidence="4">Expression is restricted to the stomach mucosa where it is predominantly observed in the epithelial cells of the pit region and the base of the gastric glands including exocrine and endocrine cells (at protein level).</text>
</comment>
<comment type="developmental stage">
    <text evidence="6">Expressed in the lungs from 23 weeks onwards, expression increases during the third trimester resulting in significantly higher expression at birth.</text>
</comment>
<comment type="similarity">
    <text evidence="9">Belongs to the claudin family.</text>
</comment>
<gene>
    <name type="primary">CLDN18</name>
    <name type="ORF">UNQ778/PRO1572</name>
</gene>
<proteinExistence type="evidence at protein level"/>
<keyword id="KW-0025">Alternative splicing</keyword>
<keyword id="KW-0965">Cell junction</keyword>
<keyword id="KW-1003">Cell membrane</keyword>
<keyword id="KW-0472">Membrane</keyword>
<keyword id="KW-0597">Phosphoprotein</keyword>
<keyword id="KW-1267">Proteomics identification</keyword>
<keyword id="KW-1185">Reference proteome</keyword>
<keyword id="KW-0796">Tight junction</keyword>
<keyword id="KW-0812">Transmembrane</keyword>
<keyword id="KW-1133">Transmembrane helix</keyword>
<name>CLD18_HUMAN</name>
<evidence type="ECO:0000250" key="1">
    <source>
        <dbReference type="UniProtKB" id="P56857"/>
    </source>
</evidence>
<evidence type="ECO:0000255" key="2"/>
<evidence type="ECO:0000256" key="3">
    <source>
        <dbReference type="SAM" id="MobiDB-lite"/>
    </source>
</evidence>
<evidence type="ECO:0000269" key="4">
    <source>
    </source>
</evidence>
<evidence type="ECO:0000269" key="5">
    <source>
    </source>
</evidence>
<evidence type="ECO:0000269" key="6">
    <source>
    </source>
</evidence>
<evidence type="ECO:0000303" key="7">
    <source>
    </source>
</evidence>
<evidence type="ECO:0000303" key="8">
    <source>
    </source>
</evidence>
<evidence type="ECO:0000305" key="9"/>
<organism>
    <name type="scientific">Homo sapiens</name>
    <name type="common">Human</name>
    <dbReference type="NCBI Taxonomy" id="9606"/>
    <lineage>
        <taxon>Eukaryota</taxon>
        <taxon>Metazoa</taxon>
        <taxon>Chordata</taxon>
        <taxon>Craniata</taxon>
        <taxon>Vertebrata</taxon>
        <taxon>Euteleostomi</taxon>
        <taxon>Mammalia</taxon>
        <taxon>Eutheria</taxon>
        <taxon>Euarchontoglires</taxon>
        <taxon>Primates</taxon>
        <taxon>Haplorrhini</taxon>
        <taxon>Catarrhini</taxon>
        <taxon>Hominidae</taxon>
        <taxon>Homo</taxon>
    </lineage>
</organism>